<feature type="chain" id="PRO_0000085731" description="Cyclin-dependent kinase 1">
    <location>
        <begin position="1"/>
        <end position="303"/>
    </location>
</feature>
<feature type="domain" description="Protein kinase" evidence="5">
    <location>
        <begin position="4"/>
        <end position="287"/>
    </location>
</feature>
<feature type="active site" description="Proton acceptor" evidence="5 6">
    <location>
        <position position="128"/>
    </location>
</feature>
<feature type="binding site" evidence="5">
    <location>
        <begin position="10"/>
        <end position="18"/>
    </location>
    <ligand>
        <name>ATP</name>
        <dbReference type="ChEBI" id="CHEBI:30616"/>
    </ligand>
</feature>
<feature type="binding site" evidence="5">
    <location>
        <position position="33"/>
    </location>
    <ligand>
        <name>ATP</name>
        <dbReference type="ChEBI" id="CHEBI:30616"/>
    </ligand>
</feature>
<feature type="modified residue" description="Phosphothreonine" evidence="1">
    <location>
        <position position="14"/>
    </location>
</feature>
<feature type="modified residue" description="Phosphotyrosine; by wee1 and wee2" evidence="1">
    <location>
        <position position="15"/>
    </location>
</feature>
<feature type="modified residue" description="Phosphothreonine; by cak" evidence="1">
    <location>
        <position position="161"/>
    </location>
</feature>
<feature type="sequence variant">
    <original>V</original>
    <variation>I</variation>
    <location>
        <position position="49"/>
    </location>
</feature>
<feature type="sequence variant">
    <original>M</original>
    <variation>K</variation>
    <location>
        <position position="245"/>
    </location>
</feature>
<feature type="sequence variant">
    <original>I</original>
    <variation>T</variation>
    <location>
        <position position="269"/>
    </location>
</feature>
<feature type="sequence variant">
    <original>I</original>
    <variation>V</variation>
    <location>
        <position position="276"/>
    </location>
</feature>
<feature type="sequence variant">
    <original>C</original>
    <variation>S</variation>
    <location>
        <position position="299"/>
    </location>
</feature>
<reference key="1">
    <citation type="submission" date="2000-10" db="EMBL/GenBank/DDBJ databases">
        <title>cDNA cloning of Cdc2 and cyclin B in medaka species.</title>
        <authorList>
            <person name="Yamashita M."/>
            <person name="Mita K."/>
        </authorList>
    </citation>
    <scope>NUCLEOTIDE SEQUENCE [MRNA]</scope>
    <source>
        <tissue>Ovary</tissue>
    </source>
</reference>
<protein>
    <recommendedName>
        <fullName>Cyclin-dependent kinase 1</fullName>
        <shortName>CDK1</shortName>
        <ecNumber evidence="1">2.7.11.22</ecNumber>
        <ecNumber evidence="2">2.7.11.23</ecNumber>
    </recommendedName>
    <alternativeName>
        <fullName>Cell division control protein 2 homolog</fullName>
    </alternativeName>
    <alternativeName>
        <fullName>Cell division protein kinase 1</fullName>
    </alternativeName>
    <alternativeName>
        <fullName>p34 protein kinase</fullName>
    </alternativeName>
</protein>
<accession>Q9DGA2</accession>
<accession>Q9DGA1</accession>
<proteinExistence type="evidence at transcript level"/>
<comment type="function">
    <text evidence="1 3">Plays a key role in the control of the eukaryotic cell cycle by modulating the centrosome cycle as well as mitotic onset; promotes G2-M transition via association with multiple interphase cyclins (By similarity). During G2 and early mitosis, CDC25A/B/C-mediated dephosphorylation activates CDK1/cyclin complexes which phosphorylate several substrates that trigger at least centrosome separation, Golgi dynamics, nuclear envelope breakdown and chromosome condensation. Once chromosomes are condensed and aligned at the metaphase plate, CDK1 activity is switched off by WEE1- and PKMYT1-mediated phosphorylation to allow sister chromatid separation, chromosome decondensation, reformation of the nuclear envelope and cytokinesis (By similarity). Catalyzes lamin (LMNA, LMNB1 and LMNB2) phosphorylation at the onset of mitosis, promoting nuclear envelope breakdown (By similarity).</text>
</comment>
<comment type="catalytic activity">
    <reaction evidence="1">
        <text>L-seryl-[protein] + ATP = O-phospho-L-seryl-[protein] + ADP + H(+)</text>
        <dbReference type="Rhea" id="RHEA:17989"/>
        <dbReference type="Rhea" id="RHEA-COMP:9863"/>
        <dbReference type="Rhea" id="RHEA-COMP:11604"/>
        <dbReference type="ChEBI" id="CHEBI:15378"/>
        <dbReference type="ChEBI" id="CHEBI:29999"/>
        <dbReference type="ChEBI" id="CHEBI:30616"/>
        <dbReference type="ChEBI" id="CHEBI:83421"/>
        <dbReference type="ChEBI" id="CHEBI:456216"/>
        <dbReference type="EC" id="2.7.11.22"/>
    </reaction>
</comment>
<comment type="catalytic activity">
    <reaction evidence="1">
        <text>L-threonyl-[protein] + ATP = O-phospho-L-threonyl-[protein] + ADP + H(+)</text>
        <dbReference type="Rhea" id="RHEA:46608"/>
        <dbReference type="Rhea" id="RHEA-COMP:11060"/>
        <dbReference type="Rhea" id="RHEA-COMP:11605"/>
        <dbReference type="ChEBI" id="CHEBI:15378"/>
        <dbReference type="ChEBI" id="CHEBI:30013"/>
        <dbReference type="ChEBI" id="CHEBI:30616"/>
        <dbReference type="ChEBI" id="CHEBI:61977"/>
        <dbReference type="ChEBI" id="CHEBI:456216"/>
        <dbReference type="EC" id="2.7.11.22"/>
    </reaction>
</comment>
<comment type="catalytic activity">
    <reaction evidence="2">
        <text>[DNA-directed RNA polymerase] + ATP = phospho-[DNA-directed RNA polymerase] + ADP + H(+)</text>
        <dbReference type="Rhea" id="RHEA:10216"/>
        <dbReference type="Rhea" id="RHEA-COMP:11321"/>
        <dbReference type="Rhea" id="RHEA-COMP:11322"/>
        <dbReference type="ChEBI" id="CHEBI:15378"/>
        <dbReference type="ChEBI" id="CHEBI:30616"/>
        <dbReference type="ChEBI" id="CHEBI:43176"/>
        <dbReference type="ChEBI" id="CHEBI:68546"/>
        <dbReference type="ChEBI" id="CHEBI:456216"/>
        <dbReference type="EC" id="2.7.11.23"/>
    </reaction>
</comment>
<comment type="activity regulation">
    <text evidence="1">Phosphorylation at Thr-14 or Tyr-15 inactivates the enzyme, while phosphorylation at Thr-161 activates it.</text>
</comment>
<comment type="subunit">
    <text evidence="4">Forms a stable but non-covalent complex with cyclin B in mature oocytes.</text>
</comment>
<comment type="subcellular location">
    <subcellularLocation>
        <location evidence="1">Nucleus</location>
    </subcellularLocation>
    <subcellularLocation>
        <location evidence="1">Cytoplasm</location>
        <location evidence="1">Cytoskeleton</location>
        <location evidence="1">Microtubule organizing center</location>
        <location evidence="1">Centrosome</location>
    </subcellularLocation>
</comment>
<comment type="PTM">
    <text evidence="1">Phosphorylation at Tyr-15 by wee1 and wee2 inhibits the protein kinase activity and acts negative regulator of entry into mitosis (G2 to M transition).</text>
</comment>
<comment type="similarity">
    <text evidence="7">Belongs to the protein kinase superfamily. CMGC Ser/Thr protein kinase family. CDC2/CDKX subfamily.</text>
</comment>
<sequence>MEDYVKIEKIGEGTYGVVYKGRHKSTGQVVAMKKIRLESEEEGVPSTAVREVSLLQELKHPNVVRLLDVLMQESRLYLIFEFLSMDLKKYLDSIPSGQYMDPMLVKSYLYQILEGIYFCHRRRVLHRDLKPQNLLIDNKGVIKLADFGLARAFGVPVRVYTHEVVTLWYRAPEVLLGSPRYSTPVDVWSTGTIFAELATKKPLFHGDSEIDQLFRIFRTLGTPNNDVWPDVESLPDYKNTFPKWMEGSLSSMVKNLDKNGLDLLAKMLIYNPPKRISAREAMTHPYFDDLDKSTLPAACINGV</sequence>
<gene>
    <name type="primary">cdk1</name>
    <name type="synonym">cdc2</name>
</gene>
<evidence type="ECO:0000250" key="1">
    <source>
        <dbReference type="UniProtKB" id="P06493"/>
    </source>
</evidence>
<evidence type="ECO:0000250" key="2">
    <source>
        <dbReference type="UniProtKB" id="P11440"/>
    </source>
</evidence>
<evidence type="ECO:0000250" key="3">
    <source>
        <dbReference type="UniProtKB" id="P13863"/>
    </source>
</evidence>
<evidence type="ECO:0000250" key="4">
    <source>
        <dbReference type="UniProtKB" id="P51958"/>
    </source>
</evidence>
<evidence type="ECO:0000255" key="5">
    <source>
        <dbReference type="PROSITE-ProRule" id="PRU00159"/>
    </source>
</evidence>
<evidence type="ECO:0000255" key="6">
    <source>
        <dbReference type="PROSITE-ProRule" id="PRU10027"/>
    </source>
</evidence>
<evidence type="ECO:0000305" key="7"/>
<organism>
    <name type="scientific">Oryzias javanicus</name>
    <name type="common">Javanese ricefish</name>
    <name type="synonym">Aplocheilus javanicus</name>
    <dbReference type="NCBI Taxonomy" id="123683"/>
    <lineage>
        <taxon>Eukaryota</taxon>
        <taxon>Metazoa</taxon>
        <taxon>Chordata</taxon>
        <taxon>Craniata</taxon>
        <taxon>Vertebrata</taxon>
        <taxon>Euteleostomi</taxon>
        <taxon>Actinopterygii</taxon>
        <taxon>Neopterygii</taxon>
        <taxon>Teleostei</taxon>
        <taxon>Neoteleostei</taxon>
        <taxon>Acanthomorphata</taxon>
        <taxon>Ovalentaria</taxon>
        <taxon>Atherinomorphae</taxon>
        <taxon>Beloniformes</taxon>
        <taxon>Adrianichthyidae</taxon>
        <taxon>Oryziinae</taxon>
        <taxon>Oryzias</taxon>
    </lineage>
</organism>
<dbReference type="EC" id="2.7.11.22" evidence="1"/>
<dbReference type="EC" id="2.7.11.23" evidence="2"/>
<dbReference type="EMBL" id="AB050461">
    <property type="protein sequence ID" value="BAB17219.1"/>
    <property type="molecule type" value="mRNA"/>
</dbReference>
<dbReference type="EMBL" id="AB050462">
    <property type="protein sequence ID" value="BAB17220.1"/>
    <property type="molecule type" value="mRNA"/>
</dbReference>
<dbReference type="SMR" id="Q9DGA2"/>
<dbReference type="GO" id="GO:0005813">
    <property type="term" value="C:centrosome"/>
    <property type="evidence" value="ECO:0007669"/>
    <property type="project" value="UniProtKB-SubCell"/>
</dbReference>
<dbReference type="GO" id="GO:0005737">
    <property type="term" value="C:cytoplasm"/>
    <property type="evidence" value="ECO:0007669"/>
    <property type="project" value="UniProtKB-KW"/>
</dbReference>
<dbReference type="GO" id="GO:0005634">
    <property type="term" value="C:nucleus"/>
    <property type="evidence" value="ECO:0007669"/>
    <property type="project" value="UniProtKB-SubCell"/>
</dbReference>
<dbReference type="GO" id="GO:0005524">
    <property type="term" value="F:ATP binding"/>
    <property type="evidence" value="ECO:0007669"/>
    <property type="project" value="UniProtKB-KW"/>
</dbReference>
<dbReference type="GO" id="GO:0004693">
    <property type="term" value="F:cyclin-dependent protein serine/threonine kinase activity"/>
    <property type="evidence" value="ECO:0000250"/>
    <property type="project" value="UniProtKB"/>
</dbReference>
<dbReference type="GO" id="GO:0106310">
    <property type="term" value="F:protein serine kinase activity"/>
    <property type="evidence" value="ECO:0007669"/>
    <property type="project" value="RHEA"/>
</dbReference>
<dbReference type="GO" id="GO:0008353">
    <property type="term" value="F:RNA polymerase II CTD heptapeptide repeat kinase activity"/>
    <property type="evidence" value="ECO:0007669"/>
    <property type="project" value="UniProtKB-EC"/>
</dbReference>
<dbReference type="GO" id="GO:0051301">
    <property type="term" value="P:cell division"/>
    <property type="evidence" value="ECO:0007669"/>
    <property type="project" value="UniProtKB-KW"/>
</dbReference>
<dbReference type="GO" id="GO:0000086">
    <property type="term" value="P:G2/M transition of mitotic cell cycle"/>
    <property type="evidence" value="ECO:0000250"/>
    <property type="project" value="UniProtKB"/>
</dbReference>
<dbReference type="GO" id="GO:0007095">
    <property type="term" value="P:mitotic G2 DNA damage checkpoint signaling"/>
    <property type="evidence" value="ECO:0007669"/>
    <property type="project" value="TreeGrafter"/>
</dbReference>
<dbReference type="CDD" id="cd07861">
    <property type="entry name" value="STKc_CDK1_euk"/>
    <property type="match status" value="1"/>
</dbReference>
<dbReference type="FunFam" id="1.10.510.10:FF:000231">
    <property type="entry name" value="Cyclin-dependent kinase 1"/>
    <property type="match status" value="1"/>
</dbReference>
<dbReference type="FunFam" id="3.30.200.20:FF:000027">
    <property type="entry name" value="Putative Cyclin-dependent kinase 1"/>
    <property type="match status" value="1"/>
</dbReference>
<dbReference type="Gene3D" id="3.30.200.20">
    <property type="entry name" value="Phosphorylase Kinase, domain 1"/>
    <property type="match status" value="1"/>
</dbReference>
<dbReference type="Gene3D" id="1.10.510.10">
    <property type="entry name" value="Transferase(Phosphotransferase) domain 1"/>
    <property type="match status" value="1"/>
</dbReference>
<dbReference type="InterPro" id="IPR050108">
    <property type="entry name" value="CDK"/>
</dbReference>
<dbReference type="InterPro" id="IPR011009">
    <property type="entry name" value="Kinase-like_dom_sf"/>
</dbReference>
<dbReference type="InterPro" id="IPR000719">
    <property type="entry name" value="Prot_kinase_dom"/>
</dbReference>
<dbReference type="InterPro" id="IPR017441">
    <property type="entry name" value="Protein_kinase_ATP_BS"/>
</dbReference>
<dbReference type="InterPro" id="IPR008271">
    <property type="entry name" value="Ser/Thr_kinase_AS"/>
</dbReference>
<dbReference type="PANTHER" id="PTHR24056">
    <property type="entry name" value="CELL DIVISION PROTEIN KINASE"/>
    <property type="match status" value="1"/>
</dbReference>
<dbReference type="PANTHER" id="PTHR24056:SF334">
    <property type="entry name" value="CYCLIN-DEPENDENT KINASE 1"/>
    <property type="match status" value="1"/>
</dbReference>
<dbReference type="Pfam" id="PF00069">
    <property type="entry name" value="Pkinase"/>
    <property type="match status" value="1"/>
</dbReference>
<dbReference type="SMART" id="SM00220">
    <property type="entry name" value="S_TKc"/>
    <property type="match status" value="1"/>
</dbReference>
<dbReference type="SUPFAM" id="SSF56112">
    <property type="entry name" value="Protein kinase-like (PK-like)"/>
    <property type="match status" value="1"/>
</dbReference>
<dbReference type="PROSITE" id="PS00107">
    <property type="entry name" value="PROTEIN_KINASE_ATP"/>
    <property type="match status" value="1"/>
</dbReference>
<dbReference type="PROSITE" id="PS50011">
    <property type="entry name" value="PROTEIN_KINASE_DOM"/>
    <property type="match status" value="1"/>
</dbReference>
<dbReference type="PROSITE" id="PS00108">
    <property type="entry name" value="PROTEIN_KINASE_ST"/>
    <property type="match status" value="1"/>
</dbReference>
<keyword id="KW-0067">ATP-binding</keyword>
<keyword id="KW-0131">Cell cycle</keyword>
<keyword id="KW-0132">Cell division</keyword>
<keyword id="KW-0963">Cytoplasm</keyword>
<keyword id="KW-0206">Cytoskeleton</keyword>
<keyword id="KW-0418">Kinase</keyword>
<keyword id="KW-0498">Mitosis</keyword>
<keyword id="KW-0547">Nucleotide-binding</keyword>
<keyword id="KW-0539">Nucleus</keyword>
<keyword id="KW-0597">Phosphoprotein</keyword>
<keyword id="KW-0723">Serine/threonine-protein kinase</keyword>
<keyword id="KW-0808">Transferase</keyword>
<name>CDK1_ORYJA</name>